<organism>
    <name type="scientific">Arabidopsis thaliana</name>
    <name type="common">Mouse-ear cress</name>
    <dbReference type="NCBI Taxonomy" id="3702"/>
    <lineage>
        <taxon>Eukaryota</taxon>
        <taxon>Viridiplantae</taxon>
        <taxon>Streptophyta</taxon>
        <taxon>Embryophyta</taxon>
        <taxon>Tracheophyta</taxon>
        <taxon>Spermatophyta</taxon>
        <taxon>Magnoliopsida</taxon>
        <taxon>eudicotyledons</taxon>
        <taxon>Gunneridae</taxon>
        <taxon>Pentapetalae</taxon>
        <taxon>rosids</taxon>
        <taxon>malvids</taxon>
        <taxon>Brassicales</taxon>
        <taxon>Brassicaceae</taxon>
        <taxon>Camelineae</taxon>
        <taxon>Arabidopsis</taxon>
    </lineage>
</organism>
<accession>Q9LUP1</accession>
<evidence type="ECO:0000255" key="1">
    <source>
        <dbReference type="PROSITE-ProRule" id="PRU00080"/>
    </source>
</evidence>
<feature type="chain" id="PRO_0000283221" description="Putative F-box/kelch-repeat protein At3g17570">
    <location>
        <begin position="1"/>
        <end position="381"/>
    </location>
</feature>
<feature type="domain" description="F-box" evidence="1">
    <location>
        <begin position="1"/>
        <end position="45"/>
    </location>
</feature>
<feature type="repeat" description="Kelch 1">
    <location>
        <begin position="151"/>
        <end position="199"/>
    </location>
</feature>
<feature type="repeat" description="Kelch 2">
    <location>
        <begin position="229"/>
        <end position="281"/>
    </location>
</feature>
<feature type="repeat" description="Kelch 3">
    <location>
        <begin position="331"/>
        <end position="379"/>
    </location>
</feature>
<proteinExistence type="predicted"/>
<sequence length="381" mass="44467">MFTDLPRDLETEILSRVPATSLQKLKPTCKRWYTLFKDPEFLKKHVGRAEREVISLMSLRVYSLSVNLSGIHSSVEMTGMLNSLKDSEDVKISDITECNGLLLCTTDDSRLVVWNPYTGETRWIPYKSNSPYEMYQKFVLGYDNTNKSRYSYKILRCYHGLIDFGYEFEIYEFNSHSWRRFYDNSPNCSFESKGVTLKGNTYWFASDTEGRHIILRFDFATERFGRLSLLYQSGGYVDNVVETGVLSAVREEKLALLYERFDELNDSSEMKIWVTNTKIVEAKDLSWSDFLVVDSSKFMVTRMTNVMSFLVDEEKKMVVVCDTDIDQHMNRFYIVGEDIYKEVYKDIAQGWFSYWPLLISYAPSLVQIQQGKVIPGGKRKR</sequence>
<name>FBK61_ARATH</name>
<gene>
    <name type="ordered locus">At3g17570</name>
    <name type="ORF">MKP6.12</name>
</gene>
<keyword id="KW-0880">Kelch repeat</keyword>
<keyword id="KW-1185">Reference proteome</keyword>
<keyword id="KW-0677">Repeat</keyword>
<reference key="1">
    <citation type="journal article" date="2000" name="DNA Res.">
        <title>Structural analysis of Arabidopsis thaliana chromosome 3. I. Sequence features of the regions of 4,504,864 bp covered by sixty P1 and TAC clones.</title>
        <authorList>
            <person name="Sato S."/>
            <person name="Nakamura Y."/>
            <person name="Kaneko T."/>
            <person name="Katoh T."/>
            <person name="Asamizu E."/>
            <person name="Tabata S."/>
        </authorList>
    </citation>
    <scope>NUCLEOTIDE SEQUENCE [LARGE SCALE GENOMIC DNA]</scope>
    <source>
        <strain>cv. Columbia</strain>
    </source>
</reference>
<reference key="2">
    <citation type="journal article" date="2017" name="Plant J.">
        <title>Araport11: a complete reannotation of the Arabidopsis thaliana reference genome.</title>
        <authorList>
            <person name="Cheng C.Y."/>
            <person name="Krishnakumar V."/>
            <person name="Chan A.P."/>
            <person name="Thibaud-Nissen F."/>
            <person name="Schobel S."/>
            <person name="Town C.D."/>
        </authorList>
    </citation>
    <scope>GENOME REANNOTATION</scope>
    <source>
        <strain>cv. Columbia</strain>
    </source>
</reference>
<protein>
    <recommendedName>
        <fullName>Putative F-box/kelch-repeat protein At3g17570</fullName>
    </recommendedName>
</protein>
<dbReference type="EMBL" id="AB022219">
    <property type="protein sequence ID" value="BAB02046.1"/>
    <property type="molecule type" value="Genomic_DNA"/>
</dbReference>
<dbReference type="EMBL" id="CP002686">
    <property type="protein sequence ID" value="AEE75969.1"/>
    <property type="molecule type" value="Genomic_DNA"/>
</dbReference>
<dbReference type="RefSeq" id="NP_188384.1">
    <property type="nucleotide sequence ID" value="NM_112637.1"/>
</dbReference>
<dbReference type="FunCoup" id="Q9LUP1">
    <property type="interactions" value="16"/>
</dbReference>
<dbReference type="STRING" id="3702.Q9LUP1"/>
<dbReference type="PaxDb" id="3702-AT3G17570.1"/>
<dbReference type="EnsemblPlants" id="AT3G17570.1">
    <property type="protein sequence ID" value="AT3G17570.1"/>
    <property type="gene ID" value="AT3G17570"/>
</dbReference>
<dbReference type="GeneID" id="821023"/>
<dbReference type="Gramene" id="AT3G17570.1">
    <property type="protein sequence ID" value="AT3G17570.1"/>
    <property type="gene ID" value="AT3G17570"/>
</dbReference>
<dbReference type="KEGG" id="ath:AT3G17570"/>
<dbReference type="Araport" id="AT3G17570"/>
<dbReference type="TAIR" id="AT3G17570"/>
<dbReference type="HOGENOM" id="CLU_034692_0_0_1"/>
<dbReference type="InParanoid" id="Q9LUP1"/>
<dbReference type="OMA" id="ETRWIPY"/>
<dbReference type="PhylomeDB" id="Q9LUP1"/>
<dbReference type="PRO" id="PR:Q9LUP1"/>
<dbReference type="Proteomes" id="UP000006548">
    <property type="component" value="Chromosome 3"/>
</dbReference>
<dbReference type="ExpressionAtlas" id="Q9LUP1">
    <property type="expression patterns" value="baseline"/>
</dbReference>
<dbReference type="CDD" id="cd22157">
    <property type="entry name" value="F-box_AtFBW1-like"/>
    <property type="match status" value="1"/>
</dbReference>
<dbReference type="Gene3D" id="1.20.1280.50">
    <property type="match status" value="1"/>
</dbReference>
<dbReference type="InterPro" id="IPR006527">
    <property type="entry name" value="F-box-assoc_dom_typ1"/>
</dbReference>
<dbReference type="InterPro" id="IPR017451">
    <property type="entry name" value="F-box-assoc_interact_dom"/>
</dbReference>
<dbReference type="InterPro" id="IPR036047">
    <property type="entry name" value="F-box-like_dom_sf"/>
</dbReference>
<dbReference type="InterPro" id="IPR001810">
    <property type="entry name" value="F-box_dom"/>
</dbReference>
<dbReference type="InterPro" id="IPR050796">
    <property type="entry name" value="SCF_F-box_component"/>
</dbReference>
<dbReference type="NCBIfam" id="TIGR01640">
    <property type="entry name" value="F_box_assoc_1"/>
    <property type="match status" value="1"/>
</dbReference>
<dbReference type="PANTHER" id="PTHR31672">
    <property type="entry name" value="BNACNNG10540D PROTEIN"/>
    <property type="match status" value="1"/>
</dbReference>
<dbReference type="PANTHER" id="PTHR31672:SF13">
    <property type="entry name" value="F-BOX PROTEIN CPR30-LIKE"/>
    <property type="match status" value="1"/>
</dbReference>
<dbReference type="Pfam" id="PF00646">
    <property type="entry name" value="F-box"/>
    <property type="match status" value="1"/>
</dbReference>
<dbReference type="Pfam" id="PF07734">
    <property type="entry name" value="FBA_1"/>
    <property type="match status" value="1"/>
</dbReference>
<dbReference type="SMART" id="SM00256">
    <property type="entry name" value="FBOX"/>
    <property type="match status" value="1"/>
</dbReference>
<dbReference type="SUPFAM" id="SSF81383">
    <property type="entry name" value="F-box domain"/>
    <property type="match status" value="1"/>
</dbReference>
<dbReference type="PROSITE" id="PS50181">
    <property type="entry name" value="FBOX"/>
    <property type="match status" value="1"/>
</dbReference>